<reference key="1">
    <citation type="journal article" date="1989" name="Eur. J. Biochem.">
        <title>Pike eel (Muraenesox cinereus) gonadotropin. Amino acid sequences of both alpha and beta subunits.</title>
        <authorList>
            <person name="Liu C.-S."/>
            <person name="Huang F.-L."/>
            <person name="Chang Y.-S."/>
            <person name="Lo T.-B."/>
        </authorList>
    </citation>
    <scope>PROTEIN SEQUENCE</scope>
    <source>
        <tissue>Pituitary</tissue>
    </source>
</reference>
<dbReference type="PIR" id="S07091">
    <property type="entry name" value="S07091"/>
</dbReference>
<dbReference type="SMR" id="P12836"/>
<dbReference type="GlyCosmos" id="P12836">
    <property type="glycosylation" value="1 site, No reported glycans"/>
</dbReference>
<dbReference type="GO" id="GO:0005615">
    <property type="term" value="C:extracellular space"/>
    <property type="evidence" value="ECO:0000250"/>
    <property type="project" value="UniProtKB"/>
</dbReference>
<dbReference type="GO" id="GO:0016914">
    <property type="term" value="C:follicle-stimulating hormone complex"/>
    <property type="evidence" value="ECO:0000250"/>
    <property type="project" value="UniProtKB"/>
</dbReference>
<dbReference type="GO" id="GO:0016913">
    <property type="term" value="F:follicle-stimulating hormone activity"/>
    <property type="evidence" value="ECO:0000250"/>
    <property type="project" value="UniProtKB"/>
</dbReference>
<dbReference type="GO" id="GO:0007186">
    <property type="term" value="P:G protein-coupled receptor signaling pathway"/>
    <property type="evidence" value="ECO:0000250"/>
    <property type="project" value="UniProtKB"/>
</dbReference>
<dbReference type="GO" id="GO:0010893">
    <property type="term" value="P:positive regulation of steroid biosynthetic process"/>
    <property type="evidence" value="ECO:0000250"/>
    <property type="project" value="UniProtKB"/>
</dbReference>
<dbReference type="GO" id="GO:0010469">
    <property type="term" value="P:regulation of signaling receptor activity"/>
    <property type="evidence" value="ECO:0000250"/>
    <property type="project" value="UniProtKB"/>
</dbReference>
<dbReference type="GO" id="GO:0006590">
    <property type="term" value="P:thyroid hormone generation"/>
    <property type="evidence" value="ECO:0007669"/>
    <property type="project" value="TreeGrafter"/>
</dbReference>
<dbReference type="FunFam" id="2.10.90.10:FF:000011">
    <property type="entry name" value="Glycoprotein hormones alpha chain"/>
    <property type="match status" value="1"/>
</dbReference>
<dbReference type="Gene3D" id="2.10.90.10">
    <property type="entry name" value="Cystine-knot cytokines"/>
    <property type="match status" value="1"/>
</dbReference>
<dbReference type="InterPro" id="IPR029034">
    <property type="entry name" value="Cystine-knot_cytokine"/>
</dbReference>
<dbReference type="InterPro" id="IPR000476">
    <property type="entry name" value="Glyco_hormone"/>
</dbReference>
<dbReference type="PANTHER" id="PTHR11509">
    <property type="entry name" value="GLYCOPROTEIN HORMONE ALPHA CHAIN"/>
    <property type="match status" value="1"/>
</dbReference>
<dbReference type="PANTHER" id="PTHR11509:SF0">
    <property type="entry name" value="GLYCOPROTEIN HORMONES ALPHA CHAIN"/>
    <property type="match status" value="1"/>
</dbReference>
<dbReference type="Pfam" id="PF00236">
    <property type="entry name" value="Hormone_6"/>
    <property type="match status" value="1"/>
</dbReference>
<dbReference type="PRINTS" id="PR00274">
    <property type="entry name" value="GLYCOHORMONE"/>
</dbReference>
<dbReference type="SMART" id="SM00067">
    <property type="entry name" value="GHA"/>
    <property type="match status" value="1"/>
</dbReference>
<dbReference type="SUPFAM" id="SSF57501">
    <property type="entry name" value="Cystine-knot cytokines"/>
    <property type="match status" value="1"/>
</dbReference>
<dbReference type="PROSITE" id="PS00779">
    <property type="entry name" value="GLYCO_HORMONE_ALPHA_1"/>
    <property type="match status" value="1"/>
</dbReference>
<dbReference type="PROSITE" id="PS00780">
    <property type="entry name" value="GLYCO_HORMONE_ALPHA_2"/>
    <property type="match status" value="1"/>
</dbReference>
<dbReference type="PROSITE" id="PS50277">
    <property type="entry name" value="GLYCO_HORMONE_ALPHA_3"/>
    <property type="match status" value="1"/>
</dbReference>
<evidence type="ECO:0000250" key="1">
    <source>
        <dbReference type="UniProtKB" id="P01215"/>
    </source>
</evidence>
<evidence type="ECO:0000250" key="2">
    <source>
        <dbReference type="UniProtKB" id="P37204"/>
    </source>
</evidence>
<evidence type="ECO:0000305" key="3"/>
<gene>
    <name type="primary">cga</name>
</gene>
<name>GLHA_MURCI</name>
<organism>
    <name type="scientific">Muraenesox cinereus</name>
    <name type="common">Daggertooth pike conger</name>
    <name type="synonym">Muraena cinerea</name>
    <dbReference type="NCBI Taxonomy" id="7946"/>
    <lineage>
        <taxon>Eukaryota</taxon>
        <taxon>Metazoa</taxon>
        <taxon>Chordata</taxon>
        <taxon>Craniata</taxon>
        <taxon>Vertebrata</taxon>
        <taxon>Euteleostomi</taxon>
        <taxon>Actinopterygii</taxon>
        <taxon>Neopterygii</taxon>
        <taxon>Teleostei</taxon>
        <taxon>Anguilliformes</taxon>
        <taxon>Muraenesocidae</taxon>
        <taxon>Muraenesox</taxon>
    </lineage>
</organism>
<protein>
    <recommendedName>
        <fullName>Glycoprotein hormones alpha chain</fullName>
    </recommendedName>
    <alternativeName>
        <fullName>GTH-alpha</fullName>
    </alternativeName>
    <alternativeName>
        <fullName>Gonadotropin alpha chain</fullName>
    </alternativeName>
</protein>
<sequence length="93" mass="10563">YPNNEISRGGCDECRLKDNKFFSKPSAPIFQCVGCCFSRAYPTPLRSKKTMLVPKDITSEATCCVAREVTKLDNMKLENHTDCHCSTCYYHKS</sequence>
<feature type="chain" id="PRO_0000149033" description="Glycoprotein hormones alpha chain">
    <location>
        <begin position="1"/>
        <end position="93"/>
    </location>
</feature>
<feature type="glycosylation site" description="N-linked (GlcNAc...) asparagine" evidence="1">
    <location>
        <position position="79"/>
    </location>
</feature>
<feature type="disulfide bond" evidence="1">
    <location>
        <begin position="11"/>
        <end position="35"/>
    </location>
</feature>
<feature type="disulfide bond" evidence="1">
    <location>
        <begin position="14"/>
        <end position="64"/>
    </location>
</feature>
<feature type="disulfide bond" evidence="1">
    <location>
        <begin position="32"/>
        <end position="83"/>
    </location>
</feature>
<feature type="disulfide bond" evidence="1">
    <location>
        <begin position="36"/>
        <end position="85"/>
    </location>
</feature>
<feature type="disulfide bond" evidence="1">
    <location>
        <begin position="63"/>
        <end position="88"/>
    </location>
</feature>
<accession>P12836</accession>
<proteinExistence type="evidence at protein level"/>
<comment type="function">
    <text evidence="2">Shared alpha chain of heterodimeric glycoprotein hormones. These hormones bind specific receptors on target cells that in turn activate downstream signaling pathways. Involved in gametogenesis and steroidogenesis.</text>
</comment>
<comment type="subunit">
    <text evidence="2">Heterodimer. Glycoprotein hormones are heterodimers composed of a common alpha chain described here and a unique beta chain which confers their biological specificity to the different hormones.</text>
</comment>
<comment type="subcellular location">
    <subcellularLocation>
        <location evidence="2">Secreted</location>
    </subcellularLocation>
</comment>
<comment type="similarity">
    <text evidence="3">Belongs to the glycoprotein hormones subunit alpha family.</text>
</comment>
<keyword id="KW-0903">Direct protein sequencing</keyword>
<keyword id="KW-1015">Disulfide bond</keyword>
<keyword id="KW-0325">Glycoprotein</keyword>
<keyword id="KW-0372">Hormone</keyword>
<keyword id="KW-0964">Secreted</keyword>